<reference key="1">
    <citation type="journal article" date="2000" name="Nature">
        <title>Sequence and analysis of chromosome 3 of the plant Arabidopsis thaliana.</title>
        <authorList>
            <person name="Salanoubat M."/>
            <person name="Lemcke K."/>
            <person name="Rieger M."/>
            <person name="Ansorge W."/>
            <person name="Unseld M."/>
            <person name="Fartmann B."/>
            <person name="Valle G."/>
            <person name="Bloecker H."/>
            <person name="Perez-Alonso M."/>
            <person name="Obermaier B."/>
            <person name="Delseny M."/>
            <person name="Boutry M."/>
            <person name="Grivell L.A."/>
            <person name="Mache R."/>
            <person name="Puigdomenech P."/>
            <person name="De Simone V."/>
            <person name="Choisne N."/>
            <person name="Artiguenave F."/>
            <person name="Robert C."/>
            <person name="Brottier P."/>
            <person name="Wincker P."/>
            <person name="Cattolico L."/>
            <person name="Weissenbach J."/>
            <person name="Saurin W."/>
            <person name="Quetier F."/>
            <person name="Schaefer M."/>
            <person name="Mueller-Auer S."/>
            <person name="Gabel C."/>
            <person name="Fuchs M."/>
            <person name="Benes V."/>
            <person name="Wurmbach E."/>
            <person name="Drzonek H."/>
            <person name="Erfle H."/>
            <person name="Jordan N."/>
            <person name="Bangert S."/>
            <person name="Wiedelmann R."/>
            <person name="Kranz H."/>
            <person name="Voss H."/>
            <person name="Holland R."/>
            <person name="Brandt P."/>
            <person name="Nyakatura G."/>
            <person name="Vezzi A."/>
            <person name="D'Angelo M."/>
            <person name="Pallavicini A."/>
            <person name="Toppo S."/>
            <person name="Simionati B."/>
            <person name="Conrad A."/>
            <person name="Hornischer K."/>
            <person name="Kauer G."/>
            <person name="Loehnert T.-H."/>
            <person name="Nordsiek G."/>
            <person name="Reichelt J."/>
            <person name="Scharfe M."/>
            <person name="Schoen O."/>
            <person name="Bargues M."/>
            <person name="Terol J."/>
            <person name="Climent J."/>
            <person name="Navarro P."/>
            <person name="Collado C."/>
            <person name="Perez-Perez A."/>
            <person name="Ottenwaelder B."/>
            <person name="Duchemin D."/>
            <person name="Cooke R."/>
            <person name="Laudie M."/>
            <person name="Berger-Llauro C."/>
            <person name="Purnelle B."/>
            <person name="Masuy D."/>
            <person name="de Haan M."/>
            <person name="Maarse A.C."/>
            <person name="Alcaraz J.-P."/>
            <person name="Cottet A."/>
            <person name="Casacuberta E."/>
            <person name="Monfort A."/>
            <person name="Argiriou A."/>
            <person name="Flores M."/>
            <person name="Liguori R."/>
            <person name="Vitale D."/>
            <person name="Mannhaupt G."/>
            <person name="Haase D."/>
            <person name="Schoof H."/>
            <person name="Rudd S."/>
            <person name="Zaccaria P."/>
            <person name="Mewes H.-W."/>
            <person name="Mayer K.F.X."/>
            <person name="Kaul S."/>
            <person name="Town C.D."/>
            <person name="Koo H.L."/>
            <person name="Tallon L.J."/>
            <person name="Jenkins J."/>
            <person name="Rooney T."/>
            <person name="Rizzo M."/>
            <person name="Walts A."/>
            <person name="Utterback T."/>
            <person name="Fujii C.Y."/>
            <person name="Shea T.P."/>
            <person name="Creasy T.H."/>
            <person name="Haas B."/>
            <person name="Maiti R."/>
            <person name="Wu D."/>
            <person name="Peterson J."/>
            <person name="Van Aken S."/>
            <person name="Pai G."/>
            <person name="Militscher J."/>
            <person name="Sellers P."/>
            <person name="Gill J.E."/>
            <person name="Feldblyum T.V."/>
            <person name="Preuss D."/>
            <person name="Lin X."/>
            <person name="Nierman W.C."/>
            <person name="Salzberg S.L."/>
            <person name="White O."/>
            <person name="Venter J.C."/>
            <person name="Fraser C.M."/>
            <person name="Kaneko T."/>
            <person name="Nakamura Y."/>
            <person name="Sato S."/>
            <person name="Kato T."/>
            <person name="Asamizu E."/>
            <person name="Sasamoto S."/>
            <person name="Kimura T."/>
            <person name="Idesawa K."/>
            <person name="Kawashima K."/>
            <person name="Kishida Y."/>
            <person name="Kiyokawa C."/>
            <person name="Kohara M."/>
            <person name="Matsumoto M."/>
            <person name="Matsuno A."/>
            <person name="Muraki A."/>
            <person name="Nakayama S."/>
            <person name="Nakazaki N."/>
            <person name="Shinpo S."/>
            <person name="Takeuchi C."/>
            <person name="Wada T."/>
            <person name="Watanabe A."/>
            <person name="Yamada M."/>
            <person name="Yasuda M."/>
            <person name="Tabata S."/>
        </authorList>
    </citation>
    <scope>NUCLEOTIDE SEQUENCE [LARGE SCALE GENOMIC DNA]</scope>
    <source>
        <strain>cv. Columbia</strain>
    </source>
</reference>
<reference key="2">
    <citation type="journal article" date="2017" name="Plant J.">
        <title>Araport11: a complete reannotation of the Arabidopsis thaliana reference genome.</title>
        <authorList>
            <person name="Cheng C.Y."/>
            <person name="Krishnakumar V."/>
            <person name="Chan A.P."/>
            <person name="Thibaud-Nissen F."/>
            <person name="Schobel S."/>
            <person name="Town C.D."/>
        </authorList>
    </citation>
    <scope>GENOME REANNOTATION</scope>
    <source>
        <strain>cv. Columbia</strain>
    </source>
</reference>
<reference key="3">
    <citation type="submission" date="2006-03" db="EMBL/GenBank/DDBJ databases">
        <authorList>
            <person name="Underwood B.A."/>
            <person name="Xiao Y.-L."/>
            <person name="Moskal W.A. Jr."/>
            <person name="Monaghan E.L."/>
            <person name="Wang W."/>
            <person name="Redman J.C."/>
            <person name="Wu H.C."/>
            <person name="Utterback T."/>
            <person name="Town C.D."/>
        </authorList>
    </citation>
    <scope>NUCLEOTIDE SEQUENCE [LARGE SCALE MRNA] OF 1-928</scope>
    <source>
        <strain>cv. Columbia</strain>
    </source>
</reference>
<reference key="4">
    <citation type="journal article" date="2001" name="J. Biol. Chem.">
        <title>The Arabidopsis thaliana ABC protein superfamily, a complete inventory.</title>
        <authorList>
            <person name="Sanchez-Fernandez R."/>
            <person name="Davies T.G."/>
            <person name="Coleman J.O."/>
            <person name="Rea P.A."/>
        </authorList>
    </citation>
    <scope>GENE FAMILY</scope>
    <scope>NOMENCLATURE</scope>
</reference>
<reference key="5">
    <citation type="journal article" date="2008" name="Trends Plant Sci.">
        <title>Plant ABC proteins - a unified nomenclature and updated inventory.</title>
        <authorList>
            <person name="Verrier P.J."/>
            <person name="Bird D."/>
            <person name="Burla B."/>
            <person name="Dassa E."/>
            <person name="Forestier C."/>
            <person name="Geisler M."/>
            <person name="Klein M."/>
            <person name="Kolukisaoglu H.U."/>
            <person name="Lee Y."/>
            <person name="Martinoia E."/>
            <person name="Murphy A."/>
            <person name="Rea P.A."/>
            <person name="Samuels L."/>
            <person name="Schulz B."/>
            <person name="Spalding E.J."/>
            <person name="Yazaki K."/>
            <person name="Theodoulou F.L."/>
        </authorList>
    </citation>
    <scope>GENE FAMILY</scope>
    <scope>NOMENCLATURE</scope>
</reference>
<comment type="subcellular location">
    <subcellularLocation>
        <location evidence="3">Membrane</location>
        <topology evidence="3">Multi-pass membrane protein</topology>
    </subcellularLocation>
</comment>
<comment type="similarity">
    <text evidence="3">Belongs to the ABC transporter superfamily. ABCA family. CPR flippase (TC 3.A.1.211) subfamily.</text>
</comment>
<comment type="sequence caution" evidence="3">
    <conflict type="erroneous translation">
        <sequence resource="EMBL-CDS" id="ABE65998"/>
    </conflict>
    <text>Wrong choice of frame.</text>
</comment>
<comment type="sequence caution" evidence="3">
    <conflict type="erroneous gene model prediction">
        <sequence resource="EMBL-CDS" id="CAB41857"/>
    </conflict>
</comment>
<evidence type="ECO:0000255" key="1"/>
<evidence type="ECO:0000255" key="2">
    <source>
        <dbReference type="PROSITE-ProRule" id="PRU00434"/>
    </source>
</evidence>
<evidence type="ECO:0000305" key="3"/>
<accession>Q1PEH6</accession>
<accession>F4JCP2</accession>
<accession>Q9STT9</accession>
<sequence>MADSGPASFWTRANAILRKNLTYQKRNIWSNVRLIMIPFYLCIVLVFIQALFDSQVNNSLDNQCGCQCIDKLGDGKCQMTCGLEYSTRDQGFFCAIPKPQPWPPLILIPRPEYRALDANFTNDSCRRKNSCPVTILFTGNNHSLGAVLSRNLLRRPFAMNSSDLLFSLANNVLATTFKGSATNYLDAGIVSDGSIYNIQPRCPPNSNFSISIGQSPLNFTKDMRCVQGLNLWRNNSIEVNLELFEGYHKGNSDGMINEIVAAYDLFDTNMTNFNVNIWFNATYKDEARNQPYKVVRVPRLVNWVSNAYLQYLQGPRTKMLFEFVKEMPKPETKLRLDIASLIGPIFFTWVILLLLPVILNSLVYEKQQRLRIIMKMHGLGDGPYWIISYAYFLALSTFYIIFLMIFGSVIGLKFFLLNDFSLQFSFYFVYINLQISIAFLLSSAFSKVETASVAAYLYVFGSGLLGMFLFQFLLEGLSFPRRWIFVMELYPGFSLYRGLYEFSQNAYQGNLNGKDGMKWKYFSDNAIDEVFYIIIVEWFVALIATYYIDKMSSSGKDLLFFLKNQNPFKISHSLQKQVSAISVEMEKLDVIHESEKVAQLMLESSTSHAIVCDKLRKVYPGRDGNPPKKAVRVLSLAVPSGECFGMLGPNGAGKTSFINMMTGLVKPTSGAAFVQGLDICKDMDRVYTSMGVCPQHDLLWETLTGREHLLFYGRLKNLKGVDLNQAVEESLRSVNLFHGGVADKPAGKYSGGMKRRLSVAISLIGNPKVVYMDEPSTGLDPASRKNLWTVIKNAKRHTAIILTTHSMEEAEFLCDRLGIFVDGRLQCIGNPKELKGRYGGSYVLTMTTSSEHEKDVEMLVQEVSPNVKKIYHIAGTQKFEIPKDEVRISEVFQVVEKAKSNFKVFAWGLADTTLEDVFIKVARTAQAFNVFS</sequence>
<feature type="chain" id="PRO_0000240324" description="ABC transporter A family member 3">
    <location>
        <begin position="1"/>
        <end position="932"/>
    </location>
</feature>
<feature type="transmembrane region" description="Helical" evidence="1">
    <location>
        <begin position="34"/>
        <end position="54"/>
    </location>
</feature>
<feature type="transmembrane region" description="Helical" evidence="1">
    <location>
        <begin position="338"/>
        <end position="358"/>
    </location>
</feature>
<feature type="transmembrane region" description="Helical" evidence="1">
    <location>
        <begin position="392"/>
        <end position="412"/>
    </location>
</feature>
<feature type="transmembrane region" description="Helical" evidence="1">
    <location>
        <begin position="424"/>
        <end position="444"/>
    </location>
</feature>
<feature type="transmembrane region" description="Helical" evidence="1">
    <location>
        <begin position="453"/>
        <end position="473"/>
    </location>
</feature>
<feature type="transmembrane region" description="Helical" evidence="1">
    <location>
        <begin position="483"/>
        <end position="500"/>
    </location>
</feature>
<feature type="transmembrane region" description="Helical" evidence="1">
    <location>
        <begin position="526"/>
        <end position="546"/>
    </location>
</feature>
<feature type="domain" description="ABC transporter" evidence="2">
    <location>
        <begin position="610"/>
        <end position="847"/>
    </location>
</feature>
<feature type="binding site" evidence="2">
    <location>
        <begin position="648"/>
        <end position="655"/>
    </location>
    <ligand>
        <name>ATP</name>
        <dbReference type="ChEBI" id="CHEBI:30616"/>
    </ligand>
</feature>
<protein>
    <recommendedName>
        <fullName>ABC transporter A family member 3</fullName>
        <shortName>ABC transporter ABCA.3</shortName>
        <shortName>AtABCA3</shortName>
    </recommendedName>
    <alternativeName>
        <fullName>ABC2 homolog 2</fullName>
    </alternativeName>
</protein>
<dbReference type="EMBL" id="AL049746">
    <property type="protein sequence ID" value="CAB41857.1"/>
    <property type="status" value="ALT_SEQ"/>
    <property type="molecule type" value="Genomic_DNA"/>
</dbReference>
<dbReference type="EMBL" id="CP002686">
    <property type="protein sequence ID" value="AEE78324.1"/>
    <property type="molecule type" value="Genomic_DNA"/>
</dbReference>
<dbReference type="EMBL" id="DQ446742">
    <property type="protein sequence ID" value="ABE65998.1"/>
    <property type="status" value="ALT_SEQ"/>
    <property type="molecule type" value="mRNA"/>
</dbReference>
<dbReference type="PIR" id="T07713">
    <property type="entry name" value="T07713"/>
</dbReference>
<dbReference type="RefSeq" id="NP_190358.3">
    <property type="nucleotide sequence ID" value="NM_114642.4"/>
</dbReference>
<dbReference type="SMR" id="Q1PEH6"/>
<dbReference type="FunCoup" id="Q1PEH6">
    <property type="interactions" value="7"/>
</dbReference>
<dbReference type="STRING" id="3702.Q1PEH6"/>
<dbReference type="GlyGen" id="Q1PEH6">
    <property type="glycosylation" value="1 site"/>
</dbReference>
<dbReference type="PaxDb" id="3702-AT3G47740.1"/>
<dbReference type="EnsemblPlants" id="AT3G47740.1">
    <property type="protein sequence ID" value="AT3G47740.1"/>
    <property type="gene ID" value="AT3G47740"/>
</dbReference>
<dbReference type="GeneID" id="823928"/>
<dbReference type="Gramene" id="AT3G47740.1">
    <property type="protein sequence ID" value="AT3G47740.1"/>
    <property type="gene ID" value="AT3G47740"/>
</dbReference>
<dbReference type="KEGG" id="ath:AT3G47740"/>
<dbReference type="Araport" id="AT3G47740"/>
<dbReference type="TAIR" id="AT3G47740">
    <property type="gene designation" value="ABCA3"/>
</dbReference>
<dbReference type="eggNOG" id="KOG0059">
    <property type="taxonomic scope" value="Eukaryota"/>
</dbReference>
<dbReference type="HOGENOM" id="CLU_000604_19_5_1"/>
<dbReference type="InParanoid" id="Q1PEH6"/>
<dbReference type="OMA" id="CAIPKPQ"/>
<dbReference type="BioCyc" id="ARA:AT3G47740-MONOMER"/>
<dbReference type="PRO" id="PR:Q1PEH6"/>
<dbReference type="Proteomes" id="UP000006548">
    <property type="component" value="Chromosome 3"/>
</dbReference>
<dbReference type="ExpressionAtlas" id="Q1PEH6">
    <property type="expression patterns" value="baseline and differential"/>
</dbReference>
<dbReference type="GO" id="GO:0016020">
    <property type="term" value="C:membrane"/>
    <property type="evidence" value="ECO:0007669"/>
    <property type="project" value="UniProtKB-SubCell"/>
</dbReference>
<dbReference type="GO" id="GO:0140359">
    <property type="term" value="F:ABC-type transporter activity"/>
    <property type="evidence" value="ECO:0007669"/>
    <property type="project" value="InterPro"/>
</dbReference>
<dbReference type="GO" id="GO:0005524">
    <property type="term" value="F:ATP binding"/>
    <property type="evidence" value="ECO:0007669"/>
    <property type="project" value="UniProtKB-KW"/>
</dbReference>
<dbReference type="GO" id="GO:0016887">
    <property type="term" value="F:ATP hydrolysis activity"/>
    <property type="evidence" value="ECO:0007669"/>
    <property type="project" value="InterPro"/>
</dbReference>
<dbReference type="CDD" id="cd03263">
    <property type="entry name" value="ABC_subfamily_A"/>
    <property type="match status" value="1"/>
</dbReference>
<dbReference type="FunFam" id="3.40.50.300:FF:000633">
    <property type="entry name" value="ABC transporter A family member 7"/>
    <property type="match status" value="1"/>
</dbReference>
<dbReference type="Gene3D" id="3.40.50.300">
    <property type="entry name" value="P-loop containing nucleotide triphosphate hydrolases"/>
    <property type="match status" value="1"/>
</dbReference>
<dbReference type="InterPro" id="IPR003593">
    <property type="entry name" value="AAA+_ATPase"/>
</dbReference>
<dbReference type="InterPro" id="IPR013525">
    <property type="entry name" value="ABC2_TM"/>
</dbReference>
<dbReference type="InterPro" id="IPR003439">
    <property type="entry name" value="ABC_transporter-like_ATP-bd"/>
</dbReference>
<dbReference type="InterPro" id="IPR017871">
    <property type="entry name" value="ABC_transporter-like_CS"/>
</dbReference>
<dbReference type="InterPro" id="IPR026082">
    <property type="entry name" value="ABCA"/>
</dbReference>
<dbReference type="InterPro" id="IPR027417">
    <property type="entry name" value="P-loop_NTPase"/>
</dbReference>
<dbReference type="PANTHER" id="PTHR19229:SF154">
    <property type="entry name" value="ABC TRANSPORTER A FAMILY MEMBER 3-RELATED"/>
    <property type="match status" value="1"/>
</dbReference>
<dbReference type="PANTHER" id="PTHR19229">
    <property type="entry name" value="ATP-BINDING CASSETTE TRANSPORTER SUBFAMILY A ABCA"/>
    <property type="match status" value="1"/>
</dbReference>
<dbReference type="Pfam" id="PF12698">
    <property type="entry name" value="ABC2_membrane_3"/>
    <property type="match status" value="1"/>
</dbReference>
<dbReference type="Pfam" id="PF00005">
    <property type="entry name" value="ABC_tran"/>
    <property type="match status" value="1"/>
</dbReference>
<dbReference type="Pfam" id="PF24526">
    <property type="entry name" value="ABCA12_C"/>
    <property type="match status" value="1"/>
</dbReference>
<dbReference type="SMART" id="SM00382">
    <property type="entry name" value="AAA"/>
    <property type="match status" value="1"/>
</dbReference>
<dbReference type="SUPFAM" id="SSF52540">
    <property type="entry name" value="P-loop containing nucleoside triphosphate hydrolases"/>
    <property type="match status" value="1"/>
</dbReference>
<dbReference type="PROSITE" id="PS00211">
    <property type="entry name" value="ABC_TRANSPORTER_1"/>
    <property type="match status" value="1"/>
</dbReference>
<dbReference type="PROSITE" id="PS50893">
    <property type="entry name" value="ABC_TRANSPORTER_2"/>
    <property type="match status" value="1"/>
</dbReference>
<name>AB3A_ARATH</name>
<gene>
    <name type="primary">ABCA3</name>
    <name type="synonym">ATH2</name>
    <name type="ordered locus">At3g47740</name>
    <name type="ORF">T23J7.70</name>
</gene>
<proteinExistence type="evidence at transcript level"/>
<organism>
    <name type="scientific">Arabidopsis thaliana</name>
    <name type="common">Mouse-ear cress</name>
    <dbReference type="NCBI Taxonomy" id="3702"/>
    <lineage>
        <taxon>Eukaryota</taxon>
        <taxon>Viridiplantae</taxon>
        <taxon>Streptophyta</taxon>
        <taxon>Embryophyta</taxon>
        <taxon>Tracheophyta</taxon>
        <taxon>Spermatophyta</taxon>
        <taxon>Magnoliopsida</taxon>
        <taxon>eudicotyledons</taxon>
        <taxon>Gunneridae</taxon>
        <taxon>Pentapetalae</taxon>
        <taxon>rosids</taxon>
        <taxon>malvids</taxon>
        <taxon>Brassicales</taxon>
        <taxon>Brassicaceae</taxon>
        <taxon>Camelineae</taxon>
        <taxon>Arabidopsis</taxon>
    </lineage>
</organism>
<keyword id="KW-0067">ATP-binding</keyword>
<keyword id="KW-0472">Membrane</keyword>
<keyword id="KW-0547">Nucleotide-binding</keyword>
<keyword id="KW-1185">Reference proteome</keyword>
<keyword id="KW-0812">Transmembrane</keyword>
<keyword id="KW-1133">Transmembrane helix</keyword>
<keyword id="KW-0813">Transport</keyword>